<organism>
    <name type="scientific">Xenopus laevis</name>
    <name type="common">African clawed frog</name>
    <dbReference type="NCBI Taxonomy" id="8355"/>
    <lineage>
        <taxon>Eukaryota</taxon>
        <taxon>Metazoa</taxon>
        <taxon>Chordata</taxon>
        <taxon>Craniata</taxon>
        <taxon>Vertebrata</taxon>
        <taxon>Euteleostomi</taxon>
        <taxon>Amphibia</taxon>
        <taxon>Batrachia</taxon>
        <taxon>Anura</taxon>
        <taxon>Pipoidea</taxon>
        <taxon>Pipidae</taxon>
        <taxon>Xenopodinae</taxon>
        <taxon>Xenopus</taxon>
        <taxon>Xenopus</taxon>
    </lineage>
</organism>
<comment type="function">
    <text evidence="1">Involved in the regulation of homocysteine metabolism. Converts betaine and homocysteine to dimethylglycine and methionine, respectively. This reaction is also required for the irreversible oxidation of choline (By similarity).</text>
</comment>
<comment type="catalytic activity">
    <reaction>
        <text>L-homocysteine + glycine betaine = N,N-dimethylglycine + L-methionine</text>
        <dbReference type="Rhea" id="RHEA:22336"/>
        <dbReference type="ChEBI" id="CHEBI:17750"/>
        <dbReference type="ChEBI" id="CHEBI:57844"/>
        <dbReference type="ChEBI" id="CHEBI:58199"/>
        <dbReference type="ChEBI" id="CHEBI:58251"/>
        <dbReference type="EC" id="2.1.1.5"/>
    </reaction>
</comment>
<comment type="cofactor">
    <cofactor evidence="1">
        <name>Zn(2+)</name>
        <dbReference type="ChEBI" id="CHEBI:29105"/>
    </cofactor>
    <text evidence="1">Binds 1 zinc ion per subunit.</text>
</comment>
<comment type="pathway">
    <text>Amine and polyamine degradation; betaine degradation; sarcosine from betaine: step 1/2.</text>
</comment>
<comment type="pathway">
    <text>Amino-acid biosynthesis; L-methionine biosynthesis via de novo pathway; L-methionine from L-homocysteine (BhmT route): step 1/1.</text>
</comment>
<comment type="subunit">
    <text evidence="1">Homotetramer.</text>
</comment>
<comment type="subcellular location">
    <subcellularLocation>
        <location evidence="1">Cytoplasm</location>
    </subcellularLocation>
</comment>
<proteinExistence type="evidence at transcript level"/>
<sequence>MAPVGAKKGLLERLDAGEVVIGDGGFVFALEKRGYVKAGPWTPEAAVEHPEAVRQLHREFLRAGANVMQTFTFYASDDKLENRGNYVAEKISGQKVNEVACDIAREVANEGDALVAGGVSQTPSYLSCKSEVEVKGIFRKQLDVFIKKNVDFLIAEYFEHVEEAVWAVEVLKESGKPVAATLCIGPEGDLNGVSPGECAVRLAKAGASVVGVNCHFDPMTCVATVKLMKEGLVAAKVKAHLMTQPLAYHTPDCGKQGFIDLPEFPFALEPRIVTRWDIHKYARAAYDLGVRYIGGCCGFEPYHTRAIAEELAPERGFLPKGSEKHGSWGSGLEMHTKPWVRARARRDYWEKLPPASGRPYCPSMSKPDEWGVTKGDADLMQQKEATTEQQLKDLIAKQGIKSN</sequence>
<gene>
    <name type="primary">bhmt</name>
</gene>
<protein>
    <recommendedName>
        <fullName>Betaine--homocysteine S-methyltransferase 1</fullName>
        <ecNumber>2.1.1.5</ecNumber>
    </recommendedName>
</protein>
<reference key="1">
    <citation type="submission" date="2004-10" db="EMBL/GenBank/DDBJ databases">
        <authorList>
            <consortium name="NIH - Xenopus Gene Collection (XGC) project"/>
        </authorList>
    </citation>
    <scope>NUCLEOTIDE SEQUENCE [LARGE SCALE MRNA]</scope>
    <source>
        <tissue>Kidney</tissue>
    </source>
</reference>
<keyword id="KW-0963">Cytoplasm</keyword>
<keyword id="KW-0479">Metal-binding</keyword>
<keyword id="KW-0489">Methyltransferase</keyword>
<keyword id="KW-1185">Reference proteome</keyword>
<keyword id="KW-0808">Transferase</keyword>
<keyword id="KW-0862">Zinc</keyword>
<dbReference type="EC" id="2.1.1.5"/>
<dbReference type="EMBL" id="BC084414">
    <property type="protein sequence ID" value="AAH84414.1"/>
    <property type="molecule type" value="mRNA"/>
</dbReference>
<dbReference type="RefSeq" id="NP_001088416.1">
    <property type="nucleotide sequence ID" value="NM_001094947.1"/>
</dbReference>
<dbReference type="SMR" id="Q5XGM3"/>
<dbReference type="DNASU" id="495275"/>
<dbReference type="GeneID" id="495275"/>
<dbReference type="KEGG" id="xla:495275"/>
<dbReference type="AGR" id="Xenbase:XB-GENE-1008388"/>
<dbReference type="CTD" id="495275"/>
<dbReference type="Xenbase" id="XB-GENE-1008388">
    <property type="gene designation" value="bhmt.L"/>
</dbReference>
<dbReference type="OrthoDB" id="261426at2759"/>
<dbReference type="UniPathway" id="UPA00051">
    <property type="reaction ID" value="UER00083"/>
</dbReference>
<dbReference type="UniPathway" id="UPA00291">
    <property type="reaction ID" value="UER00432"/>
</dbReference>
<dbReference type="Proteomes" id="UP000186698">
    <property type="component" value="Chromosome 1L"/>
</dbReference>
<dbReference type="Bgee" id="495275">
    <property type="expression patterns" value="Expressed in pancreas and 17 other cell types or tissues"/>
</dbReference>
<dbReference type="GO" id="GO:0005829">
    <property type="term" value="C:cytosol"/>
    <property type="evidence" value="ECO:0000318"/>
    <property type="project" value="GO_Central"/>
</dbReference>
<dbReference type="GO" id="GO:0047150">
    <property type="term" value="F:betaine-homocysteine S-methyltransferase activity"/>
    <property type="evidence" value="ECO:0000318"/>
    <property type="project" value="GO_Central"/>
</dbReference>
<dbReference type="GO" id="GO:0008270">
    <property type="term" value="F:zinc ion binding"/>
    <property type="evidence" value="ECO:0007669"/>
    <property type="project" value="InterPro"/>
</dbReference>
<dbReference type="GO" id="GO:0006579">
    <property type="term" value="P:amino-acid betaine catabolic process"/>
    <property type="evidence" value="ECO:0007669"/>
    <property type="project" value="UniProtKB-UniPathway"/>
</dbReference>
<dbReference type="GO" id="GO:0071267">
    <property type="term" value="P:L-methionine salvage"/>
    <property type="evidence" value="ECO:0000318"/>
    <property type="project" value="GO_Central"/>
</dbReference>
<dbReference type="GO" id="GO:0032259">
    <property type="term" value="P:methylation"/>
    <property type="evidence" value="ECO:0007669"/>
    <property type="project" value="UniProtKB-KW"/>
</dbReference>
<dbReference type="FunFam" id="3.20.20.330:FF:000003">
    <property type="entry name" value="Betaine--homocysteine S-methyltransferase 1"/>
    <property type="match status" value="1"/>
</dbReference>
<dbReference type="Gene3D" id="3.20.20.330">
    <property type="entry name" value="Homocysteine-binding-like domain"/>
    <property type="match status" value="1"/>
</dbReference>
<dbReference type="InterPro" id="IPR017226">
    <property type="entry name" value="Betaine-hCys_S-MeTrfase_BHMT"/>
</dbReference>
<dbReference type="InterPro" id="IPR051524">
    <property type="entry name" value="BHMT"/>
</dbReference>
<dbReference type="InterPro" id="IPR003726">
    <property type="entry name" value="HCY_dom"/>
</dbReference>
<dbReference type="InterPro" id="IPR036589">
    <property type="entry name" value="HCY_dom_sf"/>
</dbReference>
<dbReference type="PANTHER" id="PTHR46120">
    <property type="entry name" value="BETAINE--HOMOCYSTEINE S-METHYLTRANSFERASE 1"/>
    <property type="match status" value="1"/>
</dbReference>
<dbReference type="PANTHER" id="PTHR46120:SF1">
    <property type="entry name" value="HCY-BINDING DOMAIN-CONTAINING PROTEIN"/>
    <property type="match status" value="1"/>
</dbReference>
<dbReference type="Pfam" id="PF02574">
    <property type="entry name" value="S-methyl_trans"/>
    <property type="match status" value="1"/>
</dbReference>
<dbReference type="PIRSF" id="PIRSF037505">
    <property type="entry name" value="Betaine_HMT"/>
    <property type="match status" value="1"/>
</dbReference>
<dbReference type="SUPFAM" id="SSF82282">
    <property type="entry name" value="Homocysteine S-methyltransferase"/>
    <property type="match status" value="1"/>
</dbReference>
<dbReference type="PROSITE" id="PS50970">
    <property type="entry name" value="HCY"/>
    <property type="match status" value="1"/>
</dbReference>
<evidence type="ECO:0000250" key="1"/>
<evidence type="ECO:0000255" key="2">
    <source>
        <dbReference type="PROSITE-ProRule" id="PRU00333"/>
    </source>
</evidence>
<name>BHMT1_XENLA</name>
<accession>Q5XGM3</accession>
<feature type="chain" id="PRO_0000273222" description="Betaine--homocysteine S-methyltransferase 1">
    <location>
        <begin position="1"/>
        <end position="403"/>
    </location>
</feature>
<feature type="domain" description="Hcy-binding" evidence="2">
    <location>
        <begin position="8"/>
        <end position="311"/>
    </location>
</feature>
<feature type="binding site" evidence="2">
    <location>
        <position position="214"/>
    </location>
    <ligand>
        <name>Zn(2+)</name>
        <dbReference type="ChEBI" id="CHEBI:29105"/>
    </ligand>
</feature>
<feature type="binding site" evidence="2">
    <location>
        <position position="296"/>
    </location>
    <ligand>
        <name>Zn(2+)</name>
        <dbReference type="ChEBI" id="CHEBI:29105"/>
    </ligand>
</feature>
<feature type="binding site" evidence="2">
    <location>
        <position position="297"/>
    </location>
    <ligand>
        <name>Zn(2+)</name>
        <dbReference type="ChEBI" id="CHEBI:29105"/>
    </ligand>
</feature>